<feature type="chain" id="PRO_1000032021" description="Elongation factor 4">
    <location>
        <begin position="1"/>
        <end position="639"/>
    </location>
</feature>
<feature type="domain" description="tr-type G">
    <location>
        <begin position="39"/>
        <end position="220"/>
    </location>
</feature>
<feature type="binding site" evidence="1">
    <location>
        <begin position="51"/>
        <end position="56"/>
    </location>
    <ligand>
        <name>GTP</name>
        <dbReference type="ChEBI" id="CHEBI:37565"/>
    </ligand>
</feature>
<feature type="binding site" evidence="1">
    <location>
        <begin position="167"/>
        <end position="170"/>
    </location>
    <ligand>
        <name>GTP</name>
        <dbReference type="ChEBI" id="CHEBI:37565"/>
    </ligand>
</feature>
<name>LEPA_MYCSJ</name>
<comment type="function">
    <text evidence="1">Required for accurate and efficient protein synthesis under certain stress conditions. May act as a fidelity factor of the translation reaction, by catalyzing a one-codon backward translocation of tRNAs on improperly translocated ribosomes. Back-translocation proceeds from a post-translocation (POST) complex to a pre-translocation (PRE) complex, thus giving elongation factor G a second chance to translocate the tRNAs correctly. Binds to ribosomes in a GTP-dependent manner.</text>
</comment>
<comment type="catalytic activity">
    <reaction evidence="1">
        <text>GTP + H2O = GDP + phosphate + H(+)</text>
        <dbReference type="Rhea" id="RHEA:19669"/>
        <dbReference type="ChEBI" id="CHEBI:15377"/>
        <dbReference type="ChEBI" id="CHEBI:15378"/>
        <dbReference type="ChEBI" id="CHEBI:37565"/>
        <dbReference type="ChEBI" id="CHEBI:43474"/>
        <dbReference type="ChEBI" id="CHEBI:58189"/>
        <dbReference type="EC" id="3.6.5.n1"/>
    </reaction>
</comment>
<comment type="subcellular location">
    <subcellularLocation>
        <location evidence="1">Cell membrane</location>
        <topology evidence="1">Peripheral membrane protein</topology>
        <orientation evidence="1">Cytoplasmic side</orientation>
    </subcellularLocation>
</comment>
<comment type="similarity">
    <text evidence="1">Belongs to the TRAFAC class translation factor GTPase superfamily. Classic translation factor GTPase family. LepA subfamily.</text>
</comment>
<evidence type="ECO:0000255" key="1">
    <source>
        <dbReference type="HAMAP-Rule" id="MF_00071"/>
    </source>
</evidence>
<proteinExistence type="inferred from homology"/>
<reference key="1">
    <citation type="submission" date="2007-02" db="EMBL/GenBank/DDBJ databases">
        <title>Complete sequence of Mycobacterium sp. JLS.</title>
        <authorList>
            <consortium name="US DOE Joint Genome Institute"/>
            <person name="Copeland A."/>
            <person name="Lucas S."/>
            <person name="Lapidus A."/>
            <person name="Barry K."/>
            <person name="Detter J.C."/>
            <person name="Glavina del Rio T."/>
            <person name="Hammon N."/>
            <person name="Israni S."/>
            <person name="Dalin E."/>
            <person name="Tice H."/>
            <person name="Pitluck S."/>
            <person name="Chain P."/>
            <person name="Malfatti S."/>
            <person name="Shin M."/>
            <person name="Vergez L."/>
            <person name="Schmutz J."/>
            <person name="Larimer F."/>
            <person name="Land M."/>
            <person name="Hauser L."/>
            <person name="Kyrpides N."/>
            <person name="Mikhailova N."/>
            <person name="Miller C.D."/>
            <person name="Anderson A.J."/>
            <person name="Sims R.C."/>
            <person name="Richardson P."/>
        </authorList>
    </citation>
    <scope>NUCLEOTIDE SEQUENCE [LARGE SCALE GENOMIC DNA]</scope>
    <source>
        <strain>JLS</strain>
    </source>
</reference>
<accession>A3Q2A6</accession>
<sequence>MCRRAPRSIPLRCAHAPRRDVYQEIPISSFADQTFTAPAQIRNFCIIAHIDHGKSTLADRMLGITGVVADRDMRAQYLDRMDIERERGITIKAQNVRLPWEVNGEKFVLHLIDTPGHVDFTYEVSRALEACEGAILLVDAAQGIEAQTLANLYLALDRDLAIIPVLNKIDLPAADPDRYAGELAHIIGCEPSDVLRVSGKTGAGVRELLDEVVRLVPPPTGDADAPARAMIFDSVYDIYRGVVTYVRVVDGKITPRERIAMMSTGATHELLEVGIVSPDPKPSAGLGVGEVGYLITGVKDVRQSKVGDTVTTARHGAKEALTGYREPRPMVYSGLYPVDGSDYPVLREALDKLQLNDAALTYEPETSVALGFGFRCGFLGLLHMEITRERLEREFNLDLISTAPNVVYRVEKDDGTEIVVTNPSDWPEGKVRTVYEPVVKTTVIAPSEFIGTIMELCQSRRGELGGMDYLSPERVELRYTMPLGEIIFDFFDSLKSRTRGYASLDYEEAGEQEADLVKVDILLQGEAVDAFSAIVHKDGASAYGNKMTTKLKELIPRQQFEVPVQAAVGSRIIARENIRAIRKDVLSKCYGGDITRKRKLLEKQKEGKKRMKTIGRVDVPQEAFVAALSTDAAGDKPKK</sequence>
<protein>
    <recommendedName>
        <fullName evidence="1">Elongation factor 4</fullName>
        <shortName evidence="1">EF-4</shortName>
        <ecNumber evidence="1">3.6.5.n1</ecNumber>
    </recommendedName>
    <alternativeName>
        <fullName evidence="1">Ribosomal back-translocase LepA</fullName>
    </alternativeName>
</protein>
<organism>
    <name type="scientific">Mycobacterium sp. (strain JLS)</name>
    <dbReference type="NCBI Taxonomy" id="164757"/>
    <lineage>
        <taxon>Bacteria</taxon>
        <taxon>Bacillati</taxon>
        <taxon>Actinomycetota</taxon>
        <taxon>Actinomycetes</taxon>
        <taxon>Mycobacteriales</taxon>
        <taxon>Mycobacteriaceae</taxon>
        <taxon>Mycobacterium</taxon>
    </lineage>
</organism>
<gene>
    <name evidence="1" type="primary">lepA</name>
    <name type="ordered locus">Mjls_3506</name>
</gene>
<dbReference type="EC" id="3.6.5.n1" evidence="1"/>
<dbReference type="EMBL" id="CP000580">
    <property type="protein sequence ID" value="ABN99283.1"/>
    <property type="molecule type" value="Genomic_DNA"/>
</dbReference>
<dbReference type="SMR" id="A3Q2A6"/>
<dbReference type="KEGG" id="mjl:Mjls_3506"/>
<dbReference type="HOGENOM" id="CLU_009995_3_3_11"/>
<dbReference type="GO" id="GO:0005886">
    <property type="term" value="C:plasma membrane"/>
    <property type="evidence" value="ECO:0007669"/>
    <property type="project" value="UniProtKB-SubCell"/>
</dbReference>
<dbReference type="GO" id="GO:0005525">
    <property type="term" value="F:GTP binding"/>
    <property type="evidence" value="ECO:0007669"/>
    <property type="project" value="UniProtKB-UniRule"/>
</dbReference>
<dbReference type="GO" id="GO:0003924">
    <property type="term" value="F:GTPase activity"/>
    <property type="evidence" value="ECO:0007669"/>
    <property type="project" value="UniProtKB-UniRule"/>
</dbReference>
<dbReference type="GO" id="GO:0043022">
    <property type="term" value="F:ribosome binding"/>
    <property type="evidence" value="ECO:0007669"/>
    <property type="project" value="UniProtKB-UniRule"/>
</dbReference>
<dbReference type="GO" id="GO:0003746">
    <property type="term" value="F:translation elongation factor activity"/>
    <property type="evidence" value="ECO:0007669"/>
    <property type="project" value="UniProtKB-UniRule"/>
</dbReference>
<dbReference type="GO" id="GO:0045727">
    <property type="term" value="P:positive regulation of translation"/>
    <property type="evidence" value="ECO:0007669"/>
    <property type="project" value="UniProtKB-UniRule"/>
</dbReference>
<dbReference type="CDD" id="cd03699">
    <property type="entry name" value="EF4_II"/>
    <property type="match status" value="1"/>
</dbReference>
<dbReference type="CDD" id="cd16260">
    <property type="entry name" value="EF4_III"/>
    <property type="match status" value="1"/>
</dbReference>
<dbReference type="CDD" id="cd01890">
    <property type="entry name" value="LepA"/>
    <property type="match status" value="1"/>
</dbReference>
<dbReference type="CDD" id="cd03709">
    <property type="entry name" value="lepA_C"/>
    <property type="match status" value="1"/>
</dbReference>
<dbReference type="FunFam" id="3.30.70.240:FF:000011">
    <property type="entry name" value="Elongation factor 4"/>
    <property type="match status" value="1"/>
</dbReference>
<dbReference type="FunFam" id="3.40.50.300:FF:000078">
    <property type="entry name" value="Elongation factor 4"/>
    <property type="match status" value="1"/>
</dbReference>
<dbReference type="FunFam" id="2.40.30.10:FF:000015">
    <property type="entry name" value="Translation factor GUF1, mitochondrial"/>
    <property type="match status" value="1"/>
</dbReference>
<dbReference type="FunFam" id="3.30.70.2570:FF:000001">
    <property type="entry name" value="Translation factor GUF1, mitochondrial"/>
    <property type="match status" value="1"/>
</dbReference>
<dbReference type="FunFam" id="3.30.70.870:FF:000004">
    <property type="entry name" value="Translation factor GUF1, mitochondrial"/>
    <property type="match status" value="1"/>
</dbReference>
<dbReference type="Gene3D" id="3.30.70.240">
    <property type="match status" value="1"/>
</dbReference>
<dbReference type="Gene3D" id="3.30.70.2570">
    <property type="entry name" value="Elongation factor 4, C-terminal domain"/>
    <property type="match status" value="1"/>
</dbReference>
<dbReference type="Gene3D" id="3.30.70.870">
    <property type="entry name" value="Elongation Factor G (Translational Gtpase), domain 3"/>
    <property type="match status" value="1"/>
</dbReference>
<dbReference type="Gene3D" id="3.40.50.300">
    <property type="entry name" value="P-loop containing nucleotide triphosphate hydrolases"/>
    <property type="match status" value="1"/>
</dbReference>
<dbReference type="Gene3D" id="2.40.30.10">
    <property type="entry name" value="Translation factors"/>
    <property type="match status" value="1"/>
</dbReference>
<dbReference type="HAMAP" id="MF_00071">
    <property type="entry name" value="LepA"/>
    <property type="match status" value="1"/>
</dbReference>
<dbReference type="InterPro" id="IPR006297">
    <property type="entry name" value="EF-4"/>
</dbReference>
<dbReference type="InterPro" id="IPR035647">
    <property type="entry name" value="EFG_III/V"/>
</dbReference>
<dbReference type="InterPro" id="IPR000640">
    <property type="entry name" value="EFG_V-like"/>
</dbReference>
<dbReference type="InterPro" id="IPR004161">
    <property type="entry name" value="EFTu-like_2"/>
</dbReference>
<dbReference type="InterPro" id="IPR031157">
    <property type="entry name" value="G_TR_CS"/>
</dbReference>
<dbReference type="InterPro" id="IPR038363">
    <property type="entry name" value="LepA_C_sf"/>
</dbReference>
<dbReference type="InterPro" id="IPR013842">
    <property type="entry name" value="LepA_CTD"/>
</dbReference>
<dbReference type="InterPro" id="IPR035654">
    <property type="entry name" value="LepA_IV"/>
</dbReference>
<dbReference type="InterPro" id="IPR027417">
    <property type="entry name" value="P-loop_NTPase"/>
</dbReference>
<dbReference type="InterPro" id="IPR005225">
    <property type="entry name" value="Small_GTP-bd"/>
</dbReference>
<dbReference type="InterPro" id="IPR000795">
    <property type="entry name" value="T_Tr_GTP-bd_dom"/>
</dbReference>
<dbReference type="InterPro" id="IPR009000">
    <property type="entry name" value="Transl_B-barrel_sf"/>
</dbReference>
<dbReference type="NCBIfam" id="TIGR01393">
    <property type="entry name" value="lepA"/>
    <property type="match status" value="1"/>
</dbReference>
<dbReference type="NCBIfam" id="TIGR00231">
    <property type="entry name" value="small_GTP"/>
    <property type="match status" value="1"/>
</dbReference>
<dbReference type="PANTHER" id="PTHR43512:SF4">
    <property type="entry name" value="TRANSLATION FACTOR GUF1 HOMOLOG, CHLOROPLASTIC"/>
    <property type="match status" value="1"/>
</dbReference>
<dbReference type="PANTHER" id="PTHR43512">
    <property type="entry name" value="TRANSLATION FACTOR GUF1-RELATED"/>
    <property type="match status" value="1"/>
</dbReference>
<dbReference type="Pfam" id="PF00679">
    <property type="entry name" value="EFG_C"/>
    <property type="match status" value="1"/>
</dbReference>
<dbReference type="Pfam" id="PF00009">
    <property type="entry name" value="GTP_EFTU"/>
    <property type="match status" value="1"/>
</dbReference>
<dbReference type="Pfam" id="PF03144">
    <property type="entry name" value="GTP_EFTU_D2"/>
    <property type="match status" value="1"/>
</dbReference>
<dbReference type="Pfam" id="PF06421">
    <property type="entry name" value="LepA_C"/>
    <property type="match status" value="1"/>
</dbReference>
<dbReference type="PRINTS" id="PR00315">
    <property type="entry name" value="ELONGATNFCT"/>
</dbReference>
<dbReference type="SMART" id="SM00838">
    <property type="entry name" value="EFG_C"/>
    <property type="match status" value="1"/>
</dbReference>
<dbReference type="SUPFAM" id="SSF54980">
    <property type="entry name" value="EF-G C-terminal domain-like"/>
    <property type="match status" value="2"/>
</dbReference>
<dbReference type="SUPFAM" id="SSF52540">
    <property type="entry name" value="P-loop containing nucleoside triphosphate hydrolases"/>
    <property type="match status" value="1"/>
</dbReference>
<dbReference type="SUPFAM" id="SSF50447">
    <property type="entry name" value="Translation proteins"/>
    <property type="match status" value="1"/>
</dbReference>
<dbReference type="PROSITE" id="PS00301">
    <property type="entry name" value="G_TR_1"/>
    <property type="match status" value="1"/>
</dbReference>
<dbReference type="PROSITE" id="PS51722">
    <property type="entry name" value="G_TR_2"/>
    <property type="match status" value="1"/>
</dbReference>
<keyword id="KW-1003">Cell membrane</keyword>
<keyword id="KW-0342">GTP-binding</keyword>
<keyword id="KW-0378">Hydrolase</keyword>
<keyword id="KW-0472">Membrane</keyword>
<keyword id="KW-0547">Nucleotide-binding</keyword>
<keyword id="KW-0648">Protein biosynthesis</keyword>